<protein>
    <recommendedName>
        <fullName evidence="12">Cytochrome P450 monooxygenase stcF</fullName>
        <ecNumber evidence="14">1.14.-.-</ecNumber>
    </recommendedName>
    <alternativeName>
        <fullName>Cytochrome P450 60A2</fullName>
    </alternativeName>
    <alternativeName>
        <fullName evidence="12">Sterigmatocystin biosynthesis cluster protein F</fullName>
    </alternativeName>
</protein>
<organism>
    <name type="scientific">Emericella nidulans (strain FGSC A4 / ATCC 38163 / CBS 112.46 / NRRL 194 / M139)</name>
    <name type="common">Aspergillus nidulans</name>
    <dbReference type="NCBI Taxonomy" id="227321"/>
    <lineage>
        <taxon>Eukaryota</taxon>
        <taxon>Fungi</taxon>
        <taxon>Dikarya</taxon>
        <taxon>Ascomycota</taxon>
        <taxon>Pezizomycotina</taxon>
        <taxon>Eurotiomycetes</taxon>
        <taxon>Eurotiomycetidae</taxon>
        <taxon>Eurotiales</taxon>
        <taxon>Aspergillaceae</taxon>
        <taxon>Aspergillus</taxon>
        <taxon>Aspergillus subgen. Nidulantes</taxon>
    </lineage>
</organism>
<accession>Q12609</accession>
<accession>C8VDU2</accession>
<accession>Q5AV62</accession>
<comment type="function">
    <text evidence="2 3 4 6 7 8 9 11 15">Cytochrome P450 monooxygenase; part of the gene cluster that mediates the biosynthesis of sterigmatocystin (ST), a polyketide-derived furanocoumarin which is part of the most toxic and carcinogenic compounds among the known mycotoxins (PubMed:10618248, PubMed:8643646). The first step in the biosynthesis of sterigmatocystin is the production of hexanoate by the fatty acid synthase (FAS) units stcJ and stcK (PubMed:8962148). The polyketide backbone is assembled by the non-reducing polyketide synthase stcA by condensation of the starter hexanoyl-CoA and 7 malonyl-CoA extender units followed by cyclization and release of norsolorinic acid (By similarity). Norsolorinic acid is the first stable intermediate in the biosynthesis of sterigmatocystin and is converted into averantin (AVN) by the ketoreductase stcE which reduces the hexanoate ketone to an alcohol (Probable) (PubMed:8643646). Averantin is then oxidized into 5'-hydroxyaverantin (HAVN) by the cytochrome P450 monooxygenase stcF (PubMed:10618248). 5'-hydroxyaverantin is further converted to 5'-oxyaverantin (OAVN) by the 5'-hydroxyaverantin dehydrogenase stcG (PubMed:24957370). The next step is the conversion of OAVN into averufin (AVF) which is catalyzed by a yet to be identified enzyme (PubMed:24957370). The cytochrome P450 monooxygenase stcB and the flavin-binding monooxygenase stcW are both required for the conversion of averufin to 1-hydroxyversicolorone (PubMed:10618248). The esterase stcI probably catalyzes the formation of versiconal hemiacetal acetate from 1-hydroxyversicolorone (PubMed:24957370). The oxydoreductase stcN then probably catalyzes the biosynthetic step from versiconal to versicolorin B (VERB) (PubMed:24957370). The next step is performed by the versicolorin B desaturase stcL to produce versicolorin A (VERA) (PubMed:8999832). The ketoreductase stcU and the cytochrome P450 monooxygenase stcS are involved in the conversion of versicolorin A to demethylsterigmatocystin (PubMed:7486998). The Baeyer-Villiger oxidas stcQ and the reductase stcR might be involved in the biosynthetic step from versicolorin A to demethylsterigmatocystin (PubMed:24957370). The final step in the biosynthesis of sterigmatocystin is the methylation of demethylsterigmatocystin catalyzed by the methyltransferase stcP (PubMed:8900026).</text>
</comment>
<comment type="cofactor">
    <cofactor evidence="1">
        <name>heme</name>
        <dbReference type="ChEBI" id="CHEBI:30413"/>
    </cofactor>
</comment>
<comment type="pathway">
    <text evidence="3 6">Mycotoxin biosynthesis; sterigmatocystin biosynthesis.</text>
</comment>
<comment type="induction">
    <text evidence="5 6 10">The genes forming the sterigmatocystin biosynthesis cluster are co-regulated and induced on oatmeal porridge or the fungal isolates were grown either on oatmeal porridge or in YEC medium (0.2% yeast extract, 5.0% corn steep liquor) (PubMed:8017929, PubMed:8643646). Expression is positively regulated by the cluster-specific transcription factor aflR that binds the palindromic sequence 5'-TCG(N5)CGA-3'found in the promoter (PubMed:9680223).</text>
</comment>
<comment type="disruption phenotype">
    <text evidence="3">Impairs the production of sterigmatocystin and leads to the accumulation of averantin.</text>
</comment>
<comment type="similarity">
    <text evidence="13">Belongs to the cytochrome P450 family.</text>
</comment>
<comment type="sequence caution" evidence="13">
    <conflict type="frameshift">
        <sequence resource="EMBL-CDS" id="AAC49196"/>
    </conflict>
</comment>
<comment type="sequence caution" evidence="13">
    <conflict type="erroneous gene model prediction">
        <sequence resource="EMBL-CDS" id="EAA61606"/>
    </conflict>
</comment>
<keyword id="KW-0349">Heme</keyword>
<keyword id="KW-0408">Iron</keyword>
<keyword id="KW-0479">Metal-binding</keyword>
<keyword id="KW-0503">Monooxygenase</keyword>
<keyword id="KW-0560">Oxidoreductase</keyword>
<keyword id="KW-1185">Reference proteome</keyword>
<keyword id="KW-0843">Virulence</keyword>
<name>STCF_EMENI</name>
<reference key="1">
    <citation type="journal article" date="1996" name="Proc. Natl. Acad. Sci. U.S.A.">
        <title>Twenty-five coregulated transcripts define a sterigmatocystin gene cluster in Aspergillus nidulans.</title>
        <authorList>
            <person name="Brown D.W."/>
            <person name="Yu J.-H."/>
            <person name="Kelkar H.S."/>
            <person name="Fernandes M."/>
            <person name="Nesbitt T.C."/>
            <person name="Keller N.P."/>
            <person name="Adams T.H."/>
            <person name="Leonard T.J."/>
        </authorList>
    </citation>
    <scope>NUCLEOTIDE SEQUENCE [GENOMIC DNA]</scope>
    <scope>INDUCTION</scope>
    <scope>FUNCTION</scope>
    <scope>PATHWAY</scope>
    <source>
        <strain>FGSC 26</strain>
    </source>
</reference>
<reference key="2">
    <citation type="journal article" date="2005" name="Nature">
        <title>Sequencing of Aspergillus nidulans and comparative analysis with A. fumigatus and A. oryzae.</title>
        <authorList>
            <person name="Galagan J.E."/>
            <person name="Calvo S.E."/>
            <person name="Cuomo C."/>
            <person name="Ma L.-J."/>
            <person name="Wortman J.R."/>
            <person name="Batzoglou S."/>
            <person name="Lee S.-I."/>
            <person name="Bastuerkmen M."/>
            <person name="Spevak C.C."/>
            <person name="Clutterbuck J."/>
            <person name="Kapitonov V."/>
            <person name="Jurka J."/>
            <person name="Scazzocchio C."/>
            <person name="Farman M.L."/>
            <person name="Butler J."/>
            <person name="Purcell S."/>
            <person name="Harris S."/>
            <person name="Braus G.H."/>
            <person name="Draht O."/>
            <person name="Busch S."/>
            <person name="D'Enfert C."/>
            <person name="Bouchier C."/>
            <person name="Goldman G.H."/>
            <person name="Bell-Pedersen D."/>
            <person name="Griffiths-Jones S."/>
            <person name="Doonan J.H."/>
            <person name="Yu J."/>
            <person name="Vienken K."/>
            <person name="Pain A."/>
            <person name="Freitag M."/>
            <person name="Selker E.U."/>
            <person name="Archer D.B."/>
            <person name="Penalva M.A."/>
            <person name="Oakley B.R."/>
            <person name="Momany M."/>
            <person name="Tanaka T."/>
            <person name="Kumagai T."/>
            <person name="Asai K."/>
            <person name="Machida M."/>
            <person name="Nierman W.C."/>
            <person name="Denning D.W."/>
            <person name="Caddick M.X."/>
            <person name="Hynes M."/>
            <person name="Paoletti M."/>
            <person name="Fischer R."/>
            <person name="Miller B.L."/>
            <person name="Dyer P.S."/>
            <person name="Sachs M.S."/>
            <person name="Osmani S.A."/>
            <person name="Birren B.W."/>
        </authorList>
    </citation>
    <scope>NUCLEOTIDE SEQUENCE [LARGE SCALE GENOMIC DNA]</scope>
    <source>
        <strain>FGSC A4 / ATCC 38163 / CBS 112.46 / NRRL 194 / M139</strain>
    </source>
</reference>
<reference key="3">
    <citation type="journal article" date="2009" name="Fungal Genet. Biol.">
        <title>The 2008 update of the Aspergillus nidulans genome annotation: a community effort.</title>
        <authorList>
            <person name="Wortman J.R."/>
            <person name="Gilsenan J.M."/>
            <person name="Joardar V."/>
            <person name="Deegan J."/>
            <person name="Clutterbuck J."/>
            <person name="Andersen M.R."/>
            <person name="Archer D."/>
            <person name="Bencina M."/>
            <person name="Braus G."/>
            <person name="Coutinho P."/>
            <person name="von Dohren H."/>
            <person name="Doonan J."/>
            <person name="Driessen A.J."/>
            <person name="Durek P."/>
            <person name="Espeso E."/>
            <person name="Fekete E."/>
            <person name="Flipphi M."/>
            <person name="Estrada C.G."/>
            <person name="Geysens S."/>
            <person name="Goldman G."/>
            <person name="de Groot P.W."/>
            <person name="Hansen K."/>
            <person name="Harris S.D."/>
            <person name="Heinekamp T."/>
            <person name="Helmstaedt K."/>
            <person name="Henrissat B."/>
            <person name="Hofmann G."/>
            <person name="Homan T."/>
            <person name="Horio T."/>
            <person name="Horiuchi H."/>
            <person name="James S."/>
            <person name="Jones M."/>
            <person name="Karaffa L."/>
            <person name="Karanyi Z."/>
            <person name="Kato M."/>
            <person name="Keller N."/>
            <person name="Kelly D.E."/>
            <person name="Kiel J.A."/>
            <person name="Kim J.M."/>
            <person name="van der Klei I.J."/>
            <person name="Klis F.M."/>
            <person name="Kovalchuk A."/>
            <person name="Krasevec N."/>
            <person name="Kubicek C.P."/>
            <person name="Liu B."/>
            <person name="Maccabe A."/>
            <person name="Meyer V."/>
            <person name="Mirabito P."/>
            <person name="Miskei M."/>
            <person name="Mos M."/>
            <person name="Mullins J."/>
            <person name="Nelson D.R."/>
            <person name="Nielsen J."/>
            <person name="Oakley B.R."/>
            <person name="Osmani S.A."/>
            <person name="Pakula T."/>
            <person name="Paszewski A."/>
            <person name="Paulsen I."/>
            <person name="Pilsyk S."/>
            <person name="Pocsi I."/>
            <person name="Punt P.J."/>
            <person name="Ram A.F."/>
            <person name="Ren Q."/>
            <person name="Robellet X."/>
            <person name="Robson G."/>
            <person name="Seiboth B."/>
            <person name="van Solingen P."/>
            <person name="Specht T."/>
            <person name="Sun J."/>
            <person name="Taheri-Talesh N."/>
            <person name="Takeshita N."/>
            <person name="Ussery D."/>
            <person name="vanKuyk P.A."/>
            <person name="Visser H."/>
            <person name="van de Vondervoort P.J."/>
            <person name="de Vries R.P."/>
            <person name="Walton J."/>
            <person name="Xiang X."/>
            <person name="Xiong Y."/>
            <person name="Zeng A.P."/>
            <person name="Brandt B.W."/>
            <person name="Cornell M.J."/>
            <person name="van den Hondel C.A."/>
            <person name="Visser J."/>
            <person name="Oliver S.G."/>
            <person name="Turner G."/>
        </authorList>
    </citation>
    <scope>GENOME REANNOTATION</scope>
    <source>
        <strain>FGSC A4 / ATCC 38163 / CBS 112.46 / NRRL 194 / M139</strain>
    </source>
</reference>
<reference key="4">
    <citation type="journal article" date="1994" name="Appl. Environ. Microbiol.">
        <title>Aspergillus nidulans verA is required for production of the mycotoxin sterigmatocystin.</title>
        <authorList>
            <person name="Keller N.P."/>
            <person name="Kantz N.J."/>
            <person name="Adams T.H."/>
        </authorList>
    </citation>
    <scope>FUNCTION</scope>
    <scope>INDUCTION</scope>
</reference>
<reference key="5">
    <citation type="journal article" date="1995" name="Appl. Environ. Microbiol.">
        <title>StcS, a putative P-450 monooxygenase, is required for the conversion of versicolorin A to sterigmatocystin in Aspergillus nidulans.</title>
        <authorList>
            <person name="Keller N.P."/>
            <person name="Segner S."/>
            <person name="Bhatnagar D."/>
            <person name="Adams T.H."/>
        </authorList>
    </citation>
    <scope>FUNCTION</scope>
</reference>
<reference key="6">
    <citation type="journal article" date="1995" name="J. Bacteriol.">
        <title>Sterigmatocystin biosynthesis in Aspergillus nidulans requires a novel type I polyketide synthase.</title>
        <authorList>
            <person name="Yu J.-H."/>
            <person name="Leonard T.J."/>
        </authorList>
    </citation>
    <scope>FUNCTION</scope>
    <source>
        <strain>FGSC A4 / ATCC 38163 / CBS 112.46 / NRRL 194 / M139</strain>
    </source>
</reference>
<reference key="7">
    <citation type="journal article" date="1996" name="Appl. Environ. Microbiol.">
        <title>Aspergillus nidulans stcP encodes an O-methyltransferase that is required for sterigmatocystin biosynthesis.</title>
        <authorList>
            <person name="Kelkar H.S."/>
            <person name="Keller N.P."/>
            <person name="Adams T.H."/>
        </authorList>
    </citation>
    <scope>FUNCTION</scope>
</reference>
<reference key="8">
    <citation type="journal article" date="1996" name="Proc. Natl. Acad. Sci. U.S.A.">
        <title>Aspergillus has distinct fatty acid synthases for primary and secondary metabolism.</title>
        <authorList>
            <person name="Brown D.W."/>
            <person name="Adams T.H."/>
            <person name="Keller N.P."/>
        </authorList>
    </citation>
    <scope>FUNCTION</scope>
</reference>
<reference key="9">
    <citation type="journal article" date="1997" name="J. Biol. Chem.">
        <title>Aspergillus nidulans stcL encodes a putative cytochrome P-450 monooxygenase required for bisfuran desaturation during aflatoxin/sterigmatocystin biosynthesis.</title>
        <authorList>
            <person name="Kelkar H.S."/>
            <person name="Skloss T.W."/>
            <person name="Haw J.F."/>
            <person name="Keller N.P."/>
            <person name="Adams T.H."/>
        </authorList>
    </citation>
    <scope>FUNCTION</scope>
</reference>
<reference key="10">
    <citation type="journal article" date="1998" name="Mol. Microbiol.">
        <title>Sequence-specific binding by Aspergillus nidulans aflR, a C6 zinc cluster protein regulating mycotoxin biosynthesis.</title>
        <authorList>
            <person name="Fernandes M."/>
            <person name="Keller N.P."/>
            <person name="Adams T.H."/>
        </authorList>
    </citation>
    <scope>INDUCTION</scope>
</reference>
<reference key="11">
    <citation type="journal article" date="2000" name="Appl. Environ. Microbiol.">
        <title>Requirement of monooxygenase-mediated steps for sterigmatocystin biosynthesis by Aspergillus nidulans.</title>
        <authorList>
            <person name="Keller N.P."/>
            <person name="Watanabe C.M."/>
            <person name="Kelkar H.S."/>
            <person name="Adams T.H."/>
            <person name="Townsend C.A."/>
        </authorList>
    </citation>
    <scope>FUNCTION</scope>
    <scope>DISRUPTION PHENOTYPE</scope>
</reference>
<reference key="12">
    <citation type="journal article" date="2012" name="Metabolites">
        <title>Genetics of polyketide metabolism in Aspergillus nidulans.</title>
        <authorList>
            <person name="Klejnstrup M.L."/>
            <person name="Frandsen R.J."/>
            <person name="Holm D.K."/>
            <person name="Nielsen M.T."/>
            <person name="Mortensen U.H."/>
            <person name="Larsen T.O."/>
            <person name="Nielsen J.B."/>
        </authorList>
    </citation>
    <scope>REVIEW ON STERIGMATOCYSTIN BIOSYNTHESIS</scope>
</reference>
<proteinExistence type="evidence at transcript level"/>
<dbReference type="EC" id="1.14.-.-" evidence="14"/>
<dbReference type="EMBL" id="U34740">
    <property type="protein sequence ID" value="AAC49196.1"/>
    <property type="status" value="ALT_FRAME"/>
    <property type="molecule type" value="Genomic_DNA"/>
</dbReference>
<dbReference type="EMBL" id="AACD01000132">
    <property type="protein sequence ID" value="EAA61606.1"/>
    <property type="status" value="ALT_SEQ"/>
    <property type="molecule type" value="Genomic_DNA"/>
</dbReference>
<dbReference type="EMBL" id="BN001304">
    <property type="protein sequence ID" value="CBF80171.1"/>
    <property type="molecule type" value="Genomic_DNA"/>
</dbReference>
<dbReference type="RefSeq" id="XP_681087.1">
    <property type="nucleotide sequence ID" value="XM_675995.1"/>
</dbReference>
<dbReference type="SMR" id="Q12609"/>
<dbReference type="STRING" id="227321.Q12609"/>
<dbReference type="EnsemblFungi" id="CBF80171">
    <property type="protein sequence ID" value="CBF80171"/>
    <property type="gene ID" value="ANIA_07818"/>
</dbReference>
<dbReference type="VEuPathDB" id="FungiDB:AN7818"/>
<dbReference type="eggNOG" id="KOG0158">
    <property type="taxonomic scope" value="Eukaryota"/>
</dbReference>
<dbReference type="HOGENOM" id="CLU_001570_14_11_1"/>
<dbReference type="InParanoid" id="Q12609"/>
<dbReference type="OMA" id="SVNMQRQ"/>
<dbReference type="OrthoDB" id="1470350at2759"/>
<dbReference type="UniPathway" id="UPA00377"/>
<dbReference type="Proteomes" id="UP000000560">
    <property type="component" value="Chromosome IV"/>
</dbReference>
<dbReference type="GO" id="GO:0020037">
    <property type="term" value="F:heme binding"/>
    <property type="evidence" value="ECO:0007669"/>
    <property type="project" value="InterPro"/>
</dbReference>
<dbReference type="GO" id="GO:0005506">
    <property type="term" value="F:iron ion binding"/>
    <property type="evidence" value="ECO:0007669"/>
    <property type="project" value="InterPro"/>
</dbReference>
<dbReference type="GO" id="GO:0004497">
    <property type="term" value="F:monooxygenase activity"/>
    <property type="evidence" value="ECO:0007669"/>
    <property type="project" value="UniProtKB-KW"/>
</dbReference>
<dbReference type="GO" id="GO:0016705">
    <property type="term" value="F:oxidoreductase activity, acting on paired donors, with incorporation or reduction of molecular oxygen"/>
    <property type="evidence" value="ECO:0007669"/>
    <property type="project" value="InterPro"/>
</dbReference>
<dbReference type="GO" id="GO:0045461">
    <property type="term" value="P:sterigmatocystin biosynthetic process"/>
    <property type="evidence" value="ECO:0000315"/>
    <property type="project" value="AspGD"/>
</dbReference>
<dbReference type="CDD" id="cd11058">
    <property type="entry name" value="CYP60B-like"/>
    <property type="match status" value="1"/>
</dbReference>
<dbReference type="FunFam" id="1.10.630.10:FF:000047">
    <property type="entry name" value="Cytochrome P450 monooxygenase"/>
    <property type="match status" value="1"/>
</dbReference>
<dbReference type="Gene3D" id="1.10.630.10">
    <property type="entry name" value="Cytochrome P450"/>
    <property type="match status" value="1"/>
</dbReference>
<dbReference type="InterPro" id="IPR001128">
    <property type="entry name" value="Cyt_P450"/>
</dbReference>
<dbReference type="InterPro" id="IPR017972">
    <property type="entry name" value="Cyt_P450_CS"/>
</dbReference>
<dbReference type="InterPro" id="IPR002401">
    <property type="entry name" value="Cyt_P450_E_grp-I"/>
</dbReference>
<dbReference type="InterPro" id="IPR036396">
    <property type="entry name" value="Cyt_P450_sf"/>
</dbReference>
<dbReference type="InterPro" id="IPR050121">
    <property type="entry name" value="Cytochrome_P450_monoxygenase"/>
</dbReference>
<dbReference type="PANTHER" id="PTHR24305">
    <property type="entry name" value="CYTOCHROME P450"/>
    <property type="match status" value="1"/>
</dbReference>
<dbReference type="PANTHER" id="PTHR24305:SF210">
    <property type="entry name" value="CYTOCHROME P450 MONOOXYGENASE ASQL-RELATED"/>
    <property type="match status" value="1"/>
</dbReference>
<dbReference type="Pfam" id="PF00067">
    <property type="entry name" value="p450"/>
    <property type="match status" value="1"/>
</dbReference>
<dbReference type="PRINTS" id="PR00463">
    <property type="entry name" value="EP450I"/>
</dbReference>
<dbReference type="PRINTS" id="PR00385">
    <property type="entry name" value="P450"/>
</dbReference>
<dbReference type="SUPFAM" id="SSF48264">
    <property type="entry name" value="Cytochrome P450"/>
    <property type="match status" value="1"/>
</dbReference>
<dbReference type="PROSITE" id="PS00086">
    <property type="entry name" value="CYTOCHROME_P450"/>
    <property type="match status" value="1"/>
</dbReference>
<gene>
    <name evidence="12" type="primary">stcF</name>
    <name type="synonym">cyp60A2</name>
    <name type="ORF">AN7818</name>
</gene>
<sequence>MILPLILVLYLLSTAAYRLWLHPLRNYPGPCWWAVWRVPYLKGTIRGTIVRDIQRLHNQYGPVVRIAPDELSYITPEAAKPIYTSSPEFPKDPMHLPPFHNGAPGILAADYAHHRRYRRLLASAFSEKGLRAQQGMIQSHIDRLMTRLQGNCSSGSLDMTVWFNWATFDIIGDLAFGEPFGCLERMETNPWIASIQGNVKSIPILNALRRYRLDRLIEFLAPPRLLEMRRRNAQFTAEKVDRRLKHATTTRGDLWDSVLADPPDGEPPMSRAEMVSNASAIVLAGSETSATTLSGCLWLLLTNPEYLQQLTERIRARFSTATVIDAQTVTQIQGLQAVLDESLRLYPAVPMQSNRIVPPPGARLAGSWVPGGTSVAVQQFAACRSPTNFHRPDEFIPERWEKEGEFINDRREASQPFSIGPRNCIGRQLALAEMRLILVHLLWHFDIELDRRRMENMDWMAVQGIWILWDKKPLWVVLKNRST</sequence>
<evidence type="ECO:0000250" key="1">
    <source>
        <dbReference type="UniProtKB" id="P04798"/>
    </source>
</evidence>
<evidence type="ECO:0000250" key="2">
    <source>
        <dbReference type="UniProtKB" id="Q12053"/>
    </source>
</evidence>
<evidence type="ECO:0000269" key="3">
    <source>
    </source>
</evidence>
<evidence type="ECO:0000269" key="4">
    <source>
    </source>
</evidence>
<evidence type="ECO:0000269" key="5">
    <source>
    </source>
</evidence>
<evidence type="ECO:0000269" key="6">
    <source>
    </source>
</evidence>
<evidence type="ECO:0000269" key="7">
    <source>
    </source>
</evidence>
<evidence type="ECO:0000269" key="8">
    <source>
    </source>
</evidence>
<evidence type="ECO:0000269" key="9">
    <source>
    </source>
</evidence>
<evidence type="ECO:0000269" key="10">
    <source>
    </source>
</evidence>
<evidence type="ECO:0000303" key="11">
    <source>
    </source>
</evidence>
<evidence type="ECO:0000303" key="12">
    <source>
    </source>
</evidence>
<evidence type="ECO:0000305" key="13"/>
<evidence type="ECO:0000305" key="14">
    <source>
    </source>
</evidence>
<evidence type="ECO:0000305" key="15">
    <source>
    </source>
</evidence>
<feature type="chain" id="PRO_0000052048" description="Cytochrome P450 monooxygenase stcF">
    <location>
        <begin position="1"/>
        <end position="483"/>
    </location>
</feature>
<feature type="binding site" description="axial binding residue" evidence="1">
    <location>
        <position position="424"/>
    </location>
    <ligand>
        <name>heme</name>
        <dbReference type="ChEBI" id="CHEBI:30413"/>
    </ligand>
    <ligandPart>
        <name>Fe</name>
        <dbReference type="ChEBI" id="CHEBI:18248"/>
    </ligandPart>
</feature>
<feature type="sequence conflict" description="In Ref. 1; AAC49196." evidence="13" ref="1">
    <original>L</original>
    <variation>V</variation>
    <location>
        <position position="24"/>
    </location>
</feature>
<feature type="sequence conflict" description="In Ref. 1; AAC49196." evidence="13" ref="1">
    <original>H</original>
    <variation>L</variation>
    <location>
        <position position="95"/>
    </location>
</feature>